<keyword id="KW-0143">Chaperone</keyword>
<keyword id="KW-0963">Cytoplasm</keyword>
<keyword id="KW-1185">Reference proteome</keyword>
<protein>
    <recommendedName>
        <fullName evidence="1">Chaperone protein TorD</fullName>
    </recommendedName>
</protein>
<feature type="chain" id="PRO_0000414900" description="Chaperone protein TorD">
    <location>
        <begin position="1"/>
        <end position="235"/>
    </location>
</feature>
<organism>
    <name type="scientific">Shewanella amazonensis (strain ATCC BAA-1098 / SB2B)</name>
    <dbReference type="NCBI Taxonomy" id="326297"/>
    <lineage>
        <taxon>Bacteria</taxon>
        <taxon>Pseudomonadati</taxon>
        <taxon>Pseudomonadota</taxon>
        <taxon>Gammaproteobacteria</taxon>
        <taxon>Alteromonadales</taxon>
        <taxon>Shewanellaceae</taxon>
        <taxon>Shewanella</taxon>
    </lineage>
</organism>
<proteinExistence type="inferred from homology"/>
<reference key="1">
    <citation type="submission" date="2006-12" db="EMBL/GenBank/DDBJ databases">
        <title>Complete sequence of Shewanella amazonensis SB2B.</title>
        <authorList>
            <consortium name="US DOE Joint Genome Institute"/>
            <person name="Copeland A."/>
            <person name="Lucas S."/>
            <person name="Lapidus A."/>
            <person name="Barry K."/>
            <person name="Detter J.C."/>
            <person name="Glavina del Rio T."/>
            <person name="Hammon N."/>
            <person name="Israni S."/>
            <person name="Dalin E."/>
            <person name="Tice H."/>
            <person name="Pitluck S."/>
            <person name="Munk A.C."/>
            <person name="Brettin T."/>
            <person name="Bruce D."/>
            <person name="Han C."/>
            <person name="Tapia R."/>
            <person name="Gilna P."/>
            <person name="Schmutz J."/>
            <person name="Larimer F."/>
            <person name="Land M."/>
            <person name="Hauser L."/>
            <person name="Kyrpides N."/>
            <person name="Mikhailova N."/>
            <person name="Fredrickson J."/>
            <person name="Richardson P."/>
        </authorList>
    </citation>
    <scope>NUCLEOTIDE SEQUENCE [LARGE SCALE GENOMIC DNA]</scope>
    <source>
        <strain>ATCC BAA-1098 / SB2B</strain>
    </source>
</reference>
<name>TORD_SHEAM</name>
<gene>
    <name evidence="1" type="primary">torD</name>
    <name type="ordered locus">Sama_0986</name>
</gene>
<evidence type="ECO:0000255" key="1">
    <source>
        <dbReference type="HAMAP-Rule" id="MF_01150"/>
    </source>
</evidence>
<dbReference type="EMBL" id="CP000507">
    <property type="protein sequence ID" value="ABL99193.1"/>
    <property type="molecule type" value="Genomic_DNA"/>
</dbReference>
<dbReference type="RefSeq" id="WP_011759102.1">
    <property type="nucleotide sequence ID" value="NC_008700.1"/>
</dbReference>
<dbReference type="SMR" id="A1S487"/>
<dbReference type="STRING" id="326297.Sama_0986"/>
<dbReference type="KEGG" id="saz:Sama_0986"/>
<dbReference type="eggNOG" id="COG3381">
    <property type="taxonomic scope" value="Bacteria"/>
</dbReference>
<dbReference type="HOGENOM" id="CLU_077650_4_0_6"/>
<dbReference type="OrthoDB" id="7849731at2"/>
<dbReference type="Proteomes" id="UP000009175">
    <property type="component" value="Chromosome"/>
</dbReference>
<dbReference type="GO" id="GO:0005737">
    <property type="term" value="C:cytoplasm"/>
    <property type="evidence" value="ECO:0007669"/>
    <property type="project" value="UniProtKB-SubCell"/>
</dbReference>
<dbReference type="GO" id="GO:0051259">
    <property type="term" value="P:protein complex oligomerization"/>
    <property type="evidence" value="ECO:0007669"/>
    <property type="project" value="InterPro"/>
</dbReference>
<dbReference type="GO" id="GO:0006457">
    <property type="term" value="P:protein folding"/>
    <property type="evidence" value="ECO:0007669"/>
    <property type="project" value="UniProtKB-UniRule"/>
</dbReference>
<dbReference type="Gene3D" id="1.20.120.1820">
    <property type="match status" value="1"/>
</dbReference>
<dbReference type="Gene3D" id="1.20.1280.20">
    <property type="entry name" value="HscB, C-terminal domain"/>
    <property type="match status" value="1"/>
</dbReference>
<dbReference type="HAMAP" id="MF_01150">
    <property type="entry name" value="TorD"/>
    <property type="match status" value="1"/>
</dbReference>
<dbReference type="InterPro" id="IPR023069">
    <property type="entry name" value="Chaperone_TorD"/>
</dbReference>
<dbReference type="InterPro" id="IPR020945">
    <property type="entry name" value="DMSO/NO3_reduct_chaperone"/>
</dbReference>
<dbReference type="InterPro" id="IPR036386">
    <property type="entry name" value="HscB_C_sf"/>
</dbReference>
<dbReference type="InterPro" id="IPR036411">
    <property type="entry name" value="TorD-like_sf"/>
</dbReference>
<dbReference type="InterPro" id="IPR050289">
    <property type="entry name" value="TorD/DmsD_chaperones"/>
</dbReference>
<dbReference type="NCBIfam" id="NF003442">
    <property type="entry name" value="PRK04976.1"/>
    <property type="match status" value="1"/>
</dbReference>
<dbReference type="PANTHER" id="PTHR34227:SF11">
    <property type="entry name" value="CHAPERONE PROTEIN TORD"/>
    <property type="match status" value="1"/>
</dbReference>
<dbReference type="PANTHER" id="PTHR34227">
    <property type="entry name" value="CHAPERONE PROTEIN YCDY"/>
    <property type="match status" value="1"/>
</dbReference>
<dbReference type="Pfam" id="PF02613">
    <property type="entry name" value="Nitrate_red_del"/>
    <property type="match status" value="1"/>
</dbReference>
<dbReference type="SUPFAM" id="SSF89155">
    <property type="entry name" value="TorD-like"/>
    <property type="match status" value="1"/>
</dbReference>
<comment type="function">
    <text evidence="1">Involved in the biogenesis of TorA. Acts on TorA before the insertion of the molybdenum cofactor and, as a result, probably favors a conformation of the apoenzyme that is competent for acquiring the cofactor.</text>
</comment>
<comment type="subcellular location">
    <subcellularLocation>
        <location evidence="1">Cytoplasm</location>
    </subcellularLocation>
</comment>
<comment type="similarity">
    <text evidence="1">Belongs to the TorD/DmsD family. TorD subfamily.</text>
</comment>
<sequence>MNKMSHSEEFAAGEMNAIRASVWQLLSSLYAKELSRERICELAGAELWQAFAAQVELQASASQIQAALAHAAKYDASQGGDDARLELAADFCSAFLQNAEHCAAPYASLYLGDAGKTERNETASYDTESQDKAARSLYGEKHQLMSDYLRSAGLGLDADFREPSDHLAVILGLMAHLCTSATEESQRAFLESAILSWLPEFNARLGKLKLESPLYGALGDFTLAWARLDTELLGG</sequence>
<accession>A1S487</accession>